<sequence length="492" mass="53133">MTLWINGDWITGQGERRRKTNPVSAEILWQGNDANAAQVAEACQVARAAFPRWARQPFAARQAIVEKFAALLEAHKAELTEVIARETGKPRWEAATEVTAMINKIAISIKAYHARTGEQKSELVDGAATLRHRPHGVLAVFGPYNFPGHLPNGHIVPALLAGNTLIFKPSELTPWTGETVIKLWERAGLPAGVLNLVQGGRETGQALSSLDDLDGLLFTGSASTGYQLHRQLSGQPEKILALEMGGNNPLIIEDVANTDAAVHLTLQSAFITAGQRCTCARRLLVKQGAQGDAFLARLVDVAGRLQPGRWDDDPQPFIGGLISAQAAQHVMEAWRQREALGGRTLLAPRKVKEGTSLLTPGIIELTGVADVPDEEVFGPLLNVWRYAHFDEAIRLANNTRFGLSCGLVSTDRAQFEQLLLEARAGIVNWNKPLTGAASTAPFGGIGASGNHRPSAWYAADYCAWPMASLESPELTLPATLSPGLDFSRREAV</sequence>
<feature type="chain" id="PRO_1000138055" description="N-succinylglutamate 5-semialdehyde dehydrogenase">
    <location>
        <begin position="1"/>
        <end position="492"/>
    </location>
</feature>
<feature type="active site" evidence="1">
    <location>
        <position position="243"/>
    </location>
</feature>
<feature type="active site" evidence="1">
    <location>
        <position position="277"/>
    </location>
</feature>
<feature type="binding site" evidence="1">
    <location>
        <begin position="220"/>
        <end position="225"/>
    </location>
    <ligand>
        <name>NAD(+)</name>
        <dbReference type="ChEBI" id="CHEBI:57540"/>
    </ligand>
</feature>
<proteinExistence type="inferred from homology"/>
<organism>
    <name type="scientific">Salmonella enteritidis PT4 (strain P125109)</name>
    <dbReference type="NCBI Taxonomy" id="550537"/>
    <lineage>
        <taxon>Bacteria</taxon>
        <taxon>Pseudomonadati</taxon>
        <taxon>Pseudomonadota</taxon>
        <taxon>Gammaproteobacteria</taxon>
        <taxon>Enterobacterales</taxon>
        <taxon>Enterobacteriaceae</taxon>
        <taxon>Salmonella</taxon>
    </lineage>
</organism>
<reference key="1">
    <citation type="journal article" date="2008" name="Genome Res.">
        <title>Comparative genome analysis of Salmonella enteritidis PT4 and Salmonella gallinarum 287/91 provides insights into evolutionary and host adaptation pathways.</title>
        <authorList>
            <person name="Thomson N.R."/>
            <person name="Clayton D.J."/>
            <person name="Windhorst D."/>
            <person name="Vernikos G."/>
            <person name="Davidson S."/>
            <person name="Churcher C."/>
            <person name="Quail M.A."/>
            <person name="Stevens M."/>
            <person name="Jones M.A."/>
            <person name="Watson M."/>
            <person name="Barron A."/>
            <person name="Layton A."/>
            <person name="Pickard D."/>
            <person name="Kingsley R.A."/>
            <person name="Bignell A."/>
            <person name="Clark L."/>
            <person name="Harris B."/>
            <person name="Ormond D."/>
            <person name="Abdellah Z."/>
            <person name="Brooks K."/>
            <person name="Cherevach I."/>
            <person name="Chillingworth T."/>
            <person name="Woodward J."/>
            <person name="Norberczak H."/>
            <person name="Lord A."/>
            <person name="Arrowsmith C."/>
            <person name="Jagels K."/>
            <person name="Moule S."/>
            <person name="Mungall K."/>
            <person name="Saunders M."/>
            <person name="Whitehead S."/>
            <person name="Chabalgoity J.A."/>
            <person name="Maskell D."/>
            <person name="Humphreys T."/>
            <person name="Roberts M."/>
            <person name="Barrow P.A."/>
            <person name="Dougan G."/>
            <person name="Parkhill J."/>
        </authorList>
    </citation>
    <scope>NUCLEOTIDE SEQUENCE [LARGE SCALE GENOMIC DNA]</scope>
    <source>
        <strain>P125109</strain>
    </source>
</reference>
<gene>
    <name evidence="1" type="primary">astD</name>
    <name type="ordered locus">SEN1738</name>
</gene>
<accession>B5QWI8</accession>
<name>ASTD_SALEP</name>
<protein>
    <recommendedName>
        <fullName evidence="1">N-succinylglutamate 5-semialdehyde dehydrogenase</fullName>
        <ecNumber evidence="1">1.2.1.71</ecNumber>
    </recommendedName>
    <alternativeName>
        <fullName evidence="1">Succinylglutamic semialdehyde dehydrogenase</fullName>
        <shortName evidence="1">SGSD</shortName>
    </alternativeName>
</protein>
<comment type="function">
    <text evidence="1">Catalyzes the NAD-dependent reduction of succinylglutamate semialdehyde into succinylglutamate.</text>
</comment>
<comment type="catalytic activity">
    <reaction evidence="1">
        <text>N-succinyl-L-glutamate 5-semialdehyde + NAD(+) + H2O = N-succinyl-L-glutamate + NADH + 2 H(+)</text>
        <dbReference type="Rhea" id="RHEA:10812"/>
        <dbReference type="ChEBI" id="CHEBI:15377"/>
        <dbReference type="ChEBI" id="CHEBI:15378"/>
        <dbReference type="ChEBI" id="CHEBI:57540"/>
        <dbReference type="ChEBI" id="CHEBI:57945"/>
        <dbReference type="ChEBI" id="CHEBI:58520"/>
        <dbReference type="ChEBI" id="CHEBI:58763"/>
        <dbReference type="EC" id="1.2.1.71"/>
    </reaction>
</comment>
<comment type="pathway">
    <text evidence="1">Amino-acid degradation; L-arginine degradation via AST pathway; L-glutamate and succinate from L-arginine: step 4/5.</text>
</comment>
<comment type="similarity">
    <text evidence="1">Belongs to the aldehyde dehydrogenase family. AstD subfamily.</text>
</comment>
<keyword id="KW-0056">Arginine metabolism</keyword>
<keyword id="KW-0520">NAD</keyword>
<keyword id="KW-0560">Oxidoreductase</keyword>
<dbReference type="EC" id="1.2.1.71" evidence="1"/>
<dbReference type="EMBL" id="AM933172">
    <property type="protein sequence ID" value="CAR33319.1"/>
    <property type="molecule type" value="Genomic_DNA"/>
</dbReference>
<dbReference type="RefSeq" id="WP_000177285.1">
    <property type="nucleotide sequence ID" value="NC_011294.1"/>
</dbReference>
<dbReference type="SMR" id="B5QWI8"/>
<dbReference type="KEGG" id="set:SEN1738"/>
<dbReference type="HOGENOM" id="CLU_005391_1_0_6"/>
<dbReference type="UniPathway" id="UPA00185">
    <property type="reaction ID" value="UER00282"/>
</dbReference>
<dbReference type="Proteomes" id="UP000000613">
    <property type="component" value="Chromosome"/>
</dbReference>
<dbReference type="GO" id="GO:0043824">
    <property type="term" value="F:succinylglutamate-semialdehyde dehydrogenase activity"/>
    <property type="evidence" value="ECO:0007669"/>
    <property type="project" value="UniProtKB-EC"/>
</dbReference>
<dbReference type="GO" id="GO:0019544">
    <property type="term" value="P:arginine catabolic process to glutamate"/>
    <property type="evidence" value="ECO:0007669"/>
    <property type="project" value="UniProtKB-UniRule"/>
</dbReference>
<dbReference type="GO" id="GO:0019545">
    <property type="term" value="P:arginine catabolic process to succinate"/>
    <property type="evidence" value="ECO:0007669"/>
    <property type="project" value="UniProtKB-UniRule"/>
</dbReference>
<dbReference type="CDD" id="cd07095">
    <property type="entry name" value="ALDH_SGSD_AstD"/>
    <property type="match status" value="1"/>
</dbReference>
<dbReference type="FunFam" id="3.40.309.10:FF:000013">
    <property type="entry name" value="N-succinylglutamate 5-semialdehyde dehydrogenase"/>
    <property type="match status" value="1"/>
</dbReference>
<dbReference type="FunFam" id="3.40.605.10:FF:000010">
    <property type="entry name" value="N-succinylglutamate 5-semialdehyde dehydrogenase"/>
    <property type="match status" value="1"/>
</dbReference>
<dbReference type="Gene3D" id="3.40.605.10">
    <property type="entry name" value="Aldehyde Dehydrogenase, Chain A, domain 1"/>
    <property type="match status" value="1"/>
</dbReference>
<dbReference type="Gene3D" id="3.40.309.10">
    <property type="entry name" value="Aldehyde Dehydrogenase, Chain A, domain 2"/>
    <property type="match status" value="1"/>
</dbReference>
<dbReference type="HAMAP" id="MF_01174">
    <property type="entry name" value="Aldedh_AstD"/>
    <property type="match status" value="1"/>
</dbReference>
<dbReference type="InterPro" id="IPR016161">
    <property type="entry name" value="Ald_DH/histidinol_DH"/>
</dbReference>
<dbReference type="InterPro" id="IPR016163">
    <property type="entry name" value="Ald_DH_C"/>
</dbReference>
<dbReference type="InterPro" id="IPR016160">
    <property type="entry name" value="Ald_DH_CS_CYS"/>
</dbReference>
<dbReference type="InterPro" id="IPR029510">
    <property type="entry name" value="Ald_DH_CS_GLU"/>
</dbReference>
<dbReference type="InterPro" id="IPR016162">
    <property type="entry name" value="Ald_DH_N"/>
</dbReference>
<dbReference type="InterPro" id="IPR015590">
    <property type="entry name" value="Aldehyde_DH_dom"/>
</dbReference>
<dbReference type="InterPro" id="IPR017649">
    <property type="entry name" value="SuccinylGlu_semiald_DH_AstD"/>
</dbReference>
<dbReference type="NCBIfam" id="TIGR03240">
    <property type="entry name" value="arg_catab_astD"/>
    <property type="match status" value="1"/>
</dbReference>
<dbReference type="NCBIfam" id="NF006992">
    <property type="entry name" value="PRK09457.1"/>
    <property type="match status" value="1"/>
</dbReference>
<dbReference type="PANTHER" id="PTHR11699">
    <property type="entry name" value="ALDEHYDE DEHYDROGENASE-RELATED"/>
    <property type="match status" value="1"/>
</dbReference>
<dbReference type="Pfam" id="PF00171">
    <property type="entry name" value="Aldedh"/>
    <property type="match status" value="1"/>
</dbReference>
<dbReference type="SUPFAM" id="SSF53720">
    <property type="entry name" value="ALDH-like"/>
    <property type="match status" value="1"/>
</dbReference>
<dbReference type="PROSITE" id="PS00070">
    <property type="entry name" value="ALDEHYDE_DEHYDR_CYS"/>
    <property type="match status" value="1"/>
</dbReference>
<dbReference type="PROSITE" id="PS00687">
    <property type="entry name" value="ALDEHYDE_DEHYDR_GLU"/>
    <property type="match status" value="1"/>
</dbReference>
<evidence type="ECO:0000255" key="1">
    <source>
        <dbReference type="HAMAP-Rule" id="MF_01174"/>
    </source>
</evidence>